<accession>P0A9V0</accession>
<accession>P76200</accession>
<accession>P76897</accession>
<accession>Q8X5X5</accession>
<protein>
    <recommendedName>
        <fullName>Probable acyl-CoA dehydrogenase YdiO</fullName>
        <ecNumber>1.3.-.-</ecNumber>
    </recommendedName>
</protein>
<evidence type="ECO:0000250" key="1"/>
<evidence type="ECO:0000305" key="2"/>
<keyword id="KW-0274">FAD</keyword>
<keyword id="KW-0285">Flavoprotein</keyword>
<keyword id="KW-0560">Oxidoreductase</keyword>
<keyword id="KW-1185">Reference proteome</keyword>
<proteinExistence type="inferred from homology"/>
<reference key="1">
    <citation type="journal article" date="2001" name="Nature">
        <title>Genome sequence of enterohaemorrhagic Escherichia coli O157:H7.</title>
        <authorList>
            <person name="Perna N.T."/>
            <person name="Plunkett G. III"/>
            <person name="Burland V."/>
            <person name="Mau B."/>
            <person name="Glasner J.D."/>
            <person name="Rose D.J."/>
            <person name="Mayhew G.F."/>
            <person name="Evans P.S."/>
            <person name="Gregor J."/>
            <person name="Kirkpatrick H.A."/>
            <person name="Posfai G."/>
            <person name="Hackett J."/>
            <person name="Klink S."/>
            <person name="Boutin A."/>
            <person name="Shao Y."/>
            <person name="Miller L."/>
            <person name="Grotbeck E.J."/>
            <person name="Davis N.W."/>
            <person name="Lim A."/>
            <person name="Dimalanta E.T."/>
            <person name="Potamousis K."/>
            <person name="Apodaca J."/>
            <person name="Anantharaman T.S."/>
            <person name="Lin J."/>
            <person name="Yen G."/>
            <person name="Schwartz D.C."/>
            <person name="Welch R.A."/>
            <person name="Blattner F.R."/>
        </authorList>
    </citation>
    <scope>NUCLEOTIDE SEQUENCE [LARGE SCALE GENOMIC DNA]</scope>
    <source>
        <strain>O157:H7 / EDL933 / ATCC 700927 / EHEC</strain>
    </source>
</reference>
<reference key="2">
    <citation type="journal article" date="2001" name="DNA Res.">
        <title>Complete genome sequence of enterohemorrhagic Escherichia coli O157:H7 and genomic comparison with a laboratory strain K-12.</title>
        <authorList>
            <person name="Hayashi T."/>
            <person name="Makino K."/>
            <person name="Ohnishi M."/>
            <person name="Kurokawa K."/>
            <person name="Ishii K."/>
            <person name="Yokoyama K."/>
            <person name="Han C.-G."/>
            <person name="Ohtsubo E."/>
            <person name="Nakayama K."/>
            <person name="Murata T."/>
            <person name="Tanaka M."/>
            <person name="Tobe T."/>
            <person name="Iida T."/>
            <person name="Takami H."/>
            <person name="Honda T."/>
            <person name="Sasakawa C."/>
            <person name="Ogasawara N."/>
            <person name="Yasunaga T."/>
            <person name="Kuhara S."/>
            <person name="Shiba T."/>
            <person name="Hattori M."/>
            <person name="Shinagawa H."/>
        </authorList>
    </citation>
    <scope>NUCLEOTIDE SEQUENCE [LARGE SCALE GENOMIC DNA]</scope>
    <source>
        <strain>O157:H7 / Sakai / RIMD 0509952 / EHEC</strain>
    </source>
</reference>
<feature type="chain" id="PRO_0000201207" description="Probable acyl-CoA dehydrogenase YdiO">
    <location>
        <begin position="1"/>
        <end position="383"/>
    </location>
</feature>
<name>YDIO_ECO57</name>
<sequence>MDFSLTEEQELLLASIRELITTNFPEEYFRTCDQNGTYPREFMRALADNGISMLGVPEEFGGIPADYVTQMLALMEVSKCGAPAFLITNGQCIHSMRRFGSAEQLRKTAESTLETGDPAYALALTEPGAGSDNNSATTTYTRKNGKVYINGQKTFITGAKEYPYMLVLARDPQPKDPKKAFTLWWVDSSKPGIKINPLHKIGWHMLSTCEVYLDNVEVEESDMVGEEGMGFLNVMYNFEMERLINAARSTGFAECAFEDAARYANQRIAFGKPIGHNQMIQEKLALMAIKIDNMRNMVLKVAWQADQHQSLRTSAALAKLYCARTAMEVIDDAIQIMGGLGYTDEARVSRFWRDVRCERIGGGTDEIMIYVAGRQILKDYQNK</sequence>
<organism>
    <name type="scientific">Escherichia coli O157:H7</name>
    <dbReference type="NCBI Taxonomy" id="83334"/>
    <lineage>
        <taxon>Bacteria</taxon>
        <taxon>Pseudomonadati</taxon>
        <taxon>Pseudomonadota</taxon>
        <taxon>Gammaproteobacteria</taxon>
        <taxon>Enterobacterales</taxon>
        <taxon>Enterobacteriaceae</taxon>
        <taxon>Escherichia</taxon>
    </lineage>
</organism>
<comment type="catalytic activity">
    <reaction>
        <text>a 2,3-saturated acyl-CoA + A = a 2,3-dehydroacyl-CoA + AH2</text>
        <dbReference type="Rhea" id="RHEA:48608"/>
        <dbReference type="ChEBI" id="CHEBI:13193"/>
        <dbReference type="ChEBI" id="CHEBI:17499"/>
        <dbReference type="ChEBI" id="CHEBI:60015"/>
        <dbReference type="ChEBI" id="CHEBI:65111"/>
    </reaction>
</comment>
<comment type="cofactor">
    <cofactor evidence="1">
        <name>FAD</name>
        <dbReference type="ChEBI" id="CHEBI:57692"/>
    </cofactor>
</comment>
<comment type="similarity">
    <text evidence="2">Belongs to the acyl-CoA dehydrogenase family.</text>
</comment>
<comment type="sequence caution" evidence="2">
    <conflict type="erroneous initiation">
        <sequence resource="EMBL-CDS" id="AAG56682"/>
    </conflict>
    <text>Extended N-terminus.</text>
</comment>
<dbReference type="EC" id="1.3.-.-"/>
<dbReference type="EMBL" id="AE005174">
    <property type="protein sequence ID" value="AAG56682.1"/>
    <property type="status" value="ALT_INIT"/>
    <property type="molecule type" value="Genomic_DNA"/>
</dbReference>
<dbReference type="EMBL" id="BA000007">
    <property type="protein sequence ID" value="BAB35825.2"/>
    <property type="molecule type" value="Genomic_DNA"/>
</dbReference>
<dbReference type="RefSeq" id="NP_310429.2">
    <property type="nucleotide sequence ID" value="NC_002695.1"/>
</dbReference>
<dbReference type="RefSeq" id="WP_000347850.1">
    <property type="nucleotide sequence ID" value="NZ_VOAI01000007.1"/>
</dbReference>
<dbReference type="SMR" id="P0A9V0"/>
<dbReference type="STRING" id="155864.Z2723"/>
<dbReference type="GeneID" id="914999"/>
<dbReference type="KEGG" id="ece:Z2723"/>
<dbReference type="KEGG" id="ecs:ECs_2402"/>
<dbReference type="PATRIC" id="fig|386585.9.peg.2515"/>
<dbReference type="eggNOG" id="COG1960">
    <property type="taxonomic scope" value="Bacteria"/>
</dbReference>
<dbReference type="HOGENOM" id="CLU_018204_0_2_6"/>
<dbReference type="OMA" id="CFITNSG"/>
<dbReference type="Proteomes" id="UP000000558">
    <property type="component" value="Chromosome"/>
</dbReference>
<dbReference type="Proteomes" id="UP000002519">
    <property type="component" value="Chromosome"/>
</dbReference>
<dbReference type="GO" id="GO:0003995">
    <property type="term" value="F:acyl-CoA dehydrogenase activity"/>
    <property type="evidence" value="ECO:0007669"/>
    <property type="project" value="InterPro"/>
</dbReference>
<dbReference type="GO" id="GO:0050660">
    <property type="term" value="F:flavin adenine dinucleotide binding"/>
    <property type="evidence" value="ECO:0007669"/>
    <property type="project" value="InterPro"/>
</dbReference>
<dbReference type="CDD" id="cd00567">
    <property type="entry name" value="ACAD"/>
    <property type="match status" value="1"/>
</dbReference>
<dbReference type="FunFam" id="1.20.140.10:FF:000001">
    <property type="entry name" value="Acyl-CoA dehydrogenase"/>
    <property type="match status" value="1"/>
</dbReference>
<dbReference type="FunFam" id="2.40.110.10:FF:000002">
    <property type="entry name" value="Acyl-CoA dehydrogenase fadE12"/>
    <property type="match status" value="1"/>
</dbReference>
<dbReference type="FunFam" id="1.10.540.10:FF:000011">
    <property type="entry name" value="Predicted acyl-CoA dehydrogenase"/>
    <property type="match status" value="1"/>
</dbReference>
<dbReference type="Gene3D" id="1.10.540.10">
    <property type="entry name" value="Acyl-CoA dehydrogenase/oxidase, N-terminal domain"/>
    <property type="match status" value="1"/>
</dbReference>
<dbReference type="Gene3D" id="2.40.110.10">
    <property type="entry name" value="Butyryl-CoA Dehydrogenase, subunit A, domain 2"/>
    <property type="match status" value="1"/>
</dbReference>
<dbReference type="Gene3D" id="1.20.140.10">
    <property type="entry name" value="Butyryl-CoA Dehydrogenase, subunit A, domain 3"/>
    <property type="match status" value="1"/>
</dbReference>
<dbReference type="InterPro" id="IPR006089">
    <property type="entry name" value="Acyl-CoA_DH_CS"/>
</dbReference>
<dbReference type="InterPro" id="IPR006091">
    <property type="entry name" value="Acyl-CoA_Oxase/DH_mid-dom"/>
</dbReference>
<dbReference type="InterPro" id="IPR046373">
    <property type="entry name" value="Acyl-CoA_Oxase/DH_mid-dom_sf"/>
</dbReference>
<dbReference type="InterPro" id="IPR036250">
    <property type="entry name" value="AcylCo_DH-like_C"/>
</dbReference>
<dbReference type="InterPro" id="IPR009075">
    <property type="entry name" value="AcylCo_DH/oxidase_C"/>
</dbReference>
<dbReference type="InterPro" id="IPR013786">
    <property type="entry name" value="AcylCoA_DH/ox_N"/>
</dbReference>
<dbReference type="InterPro" id="IPR037069">
    <property type="entry name" value="AcylCoA_DH/ox_N_sf"/>
</dbReference>
<dbReference type="InterPro" id="IPR009100">
    <property type="entry name" value="AcylCoA_DH/oxidase_NM_dom_sf"/>
</dbReference>
<dbReference type="NCBIfam" id="NF008997">
    <property type="entry name" value="PRK12341.1"/>
    <property type="match status" value="1"/>
</dbReference>
<dbReference type="PANTHER" id="PTHR43884">
    <property type="entry name" value="ACYL-COA DEHYDROGENASE"/>
    <property type="match status" value="1"/>
</dbReference>
<dbReference type="PANTHER" id="PTHR43884:SF37">
    <property type="entry name" value="ACYL-COA DEHYDROGENASE"/>
    <property type="match status" value="1"/>
</dbReference>
<dbReference type="Pfam" id="PF00441">
    <property type="entry name" value="Acyl-CoA_dh_1"/>
    <property type="match status" value="1"/>
</dbReference>
<dbReference type="Pfam" id="PF02770">
    <property type="entry name" value="Acyl-CoA_dh_M"/>
    <property type="match status" value="1"/>
</dbReference>
<dbReference type="Pfam" id="PF02771">
    <property type="entry name" value="Acyl-CoA_dh_N"/>
    <property type="match status" value="1"/>
</dbReference>
<dbReference type="PIRSF" id="PIRSF016578">
    <property type="entry name" value="HsaA"/>
    <property type="match status" value="1"/>
</dbReference>
<dbReference type="SUPFAM" id="SSF47203">
    <property type="entry name" value="Acyl-CoA dehydrogenase C-terminal domain-like"/>
    <property type="match status" value="1"/>
</dbReference>
<dbReference type="SUPFAM" id="SSF56645">
    <property type="entry name" value="Acyl-CoA dehydrogenase NM domain-like"/>
    <property type="match status" value="1"/>
</dbReference>
<dbReference type="PROSITE" id="PS00072">
    <property type="entry name" value="ACYL_COA_DH_1"/>
    <property type="match status" value="1"/>
</dbReference>
<dbReference type="PROSITE" id="PS00073">
    <property type="entry name" value="ACYL_COA_DH_2"/>
    <property type="match status" value="1"/>
</dbReference>
<gene>
    <name type="primary">ydiO</name>
    <name type="ordered locus">Z2723</name>
    <name type="ordered locus">ECs2402</name>
</gene>